<organism>
    <name type="scientific">Chlorella vulgaris</name>
    <name type="common">Green alga</name>
    <dbReference type="NCBI Taxonomy" id="3077"/>
    <lineage>
        <taxon>Eukaryota</taxon>
        <taxon>Viridiplantae</taxon>
        <taxon>Chlorophyta</taxon>
        <taxon>core chlorophytes</taxon>
        <taxon>Trebouxiophyceae</taxon>
        <taxon>Chlorellales</taxon>
        <taxon>Chlorellaceae</taxon>
        <taxon>Chlorella clade</taxon>
        <taxon>Chlorella</taxon>
    </lineage>
</organism>
<proteinExistence type="inferred from homology"/>
<comment type="subunit">
    <text evidence="1">Part of the 30S ribosomal subunit.</text>
</comment>
<comment type="subcellular location">
    <subcellularLocation>
        <location>Plastid</location>
        <location>Chloroplast</location>
    </subcellularLocation>
</comment>
<comment type="similarity">
    <text evidence="2">Belongs to the universal ribosomal protein uS3 family.</text>
</comment>
<feature type="chain" id="PRO_0000130276" description="Small ribosomal subunit protein uS3c">
    <location>
        <begin position="1"/>
        <end position="231"/>
    </location>
</feature>
<feature type="domain" description="KH type-2">
    <location>
        <begin position="39"/>
        <end position="123"/>
    </location>
</feature>
<sequence length="231" mass="26404">MGQKVHPIGFRLGITQKHRSYWCTTPQKSALWIQDASFLRNFIKKKYIGAGITHIEIQRQDVDSPSLGIQIYAARLRQIAGNDSKGLERLQEELVKQLQIFYRKRNLVEPGTIHLRLSVKPLRAPEAYAEVLAEKLVEELEQRKPFRRAMRQTVQRALRAGVKGIKVQISGRLNGADIARSEDVREGPVPLQTLRADIDYSSKPAKTIFGLLGIKIWVFRGERLTRISNVR</sequence>
<accession>P56365</accession>
<keyword id="KW-0150">Chloroplast</keyword>
<keyword id="KW-0934">Plastid</keyword>
<keyword id="KW-0687">Ribonucleoprotein</keyword>
<keyword id="KW-0689">Ribosomal protein</keyword>
<keyword id="KW-0694">RNA-binding</keyword>
<keyword id="KW-0699">rRNA-binding</keyword>
<name>RR3_CHLVU</name>
<reference key="1">
    <citation type="journal article" date="1997" name="Proc. Natl. Acad. Sci. U.S.A.">
        <title>Complete nucleotide sequence of the chloroplast genome from the green alga Chlorella vulgaris: the existence of genes possibly involved in chloroplast division.</title>
        <authorList>
            <person name="Wakasugi T."/>
            <person name="Nagai T."/>
            <person name="Kapoor M."/>
            <person name="Sugita M."/>
            <person name="Ito M."/>
            <person name="Ito S."/>
            <person name="Tsudzuki J."/>
            <person name="Nakashima K."/>
            <person name="Tsudzuki T."/>
            <person name="Suzuki Y."/>
            <person name="Hamada A."/>
            <person name="Ohta T."/>
            <person name="Inamura A."/>
            <person name="Yoshinaga K."/>
            <person name="Sugiura M."/>
        </authorList>
    </citation>
    <scope>NUCLEOTIDE SEQUENCE [LARGE SCALE GENOMIC DNA]</scope>
    <source>
        <strain>IAM C-27 / Tamiya</strain>
    </source>
</reference>
<evidence type="ECO:0000250" key="1"/>
<evidence type="ECO:0000305" key="2"/>
<dbReference type="EMBL" id="AB001684">
    <property type="protein sequence ID" value="BAA58006.1"/>
    <property type="molecule type" value="Genomic_DNA"/>
</dbReference>
<dbReference type="PIR" id="T07358">
    <property type="entry name" value="T07358"/>
</dbReference>
<dbReference type="RefSeq" id="NP_045930.1">
    <property type="nucleotide sequence ID" value="NC_001865.1"/>
</dbReference>
<dbReference type="SMR" id="P56365"/>
<dbReference type="GeneID" id="809141"/>
<dbReference type="GO" id="GO:0009507">
    <property type="term" value="C:chloroplast"/>
    <property type="evidence" value="ECO:0007669"/>
    <property type="project" value="UniProtKB-SubCell"/>
</dbReference>
<dbReference type="GO" id="GO:0022627">
    <property type="term" value="C:cytosolic small ribosomal subunit"/>
    <property type="evidence" value="ECO:0007669"/>
    <property type="project" value="TreeGrafter"/>
</dbReference>
<dbReference type="GO" id="GO:0019843">
    <property type="term" value="F:rRNA binding"/>
    <property type="evidence" value="ECO:0007669"/>
    <property type="project" value="UniProtKB-UniRule"/>
</dbReference>
<dbReference type="GO" id="GO:0003735">
    <property type="term" value="F:structural constituent of ribosome"/>
    <property type="evidence" value="ECO:0007669"/>
    <property type="project" value="InterPro"/>
</dbReference>
<dbReference type="GO" id="GO:0006412">
    <property type="term" value="P:translation"/>
    <property type="evidence" value="ECO:0007669"/>
    <property type="project" value="UniProtKB-UniRule"/>
</dbReference>
<dbReference type="CDD" id="cd02412">
    <property type="entry name" value="KH-II_30S_S3"/>
    <property type="match status" value="1"/>
</dbReference>
<dbReference type="Gene3D" id="3.30.300.20">
    <property type="match status" value="1"/>
</dbReference>
<dbReference type="Gene3D" id="3.30.1140.32">
    <property type="entry name" value="Ribosomal protein S3, C-terminal domain"/>
    <property type="match status" value="1"/>
</dbReference>
<dbReference type="HAMAP" id="MF_01309_B">
    <property type="entry name" value="Ribosomal_uS3_B"/>
    <property type="match status" value="1"/>
</dbReference>
<dbReference type="InterPro" id="IPR015946">
    <property type="entry name" value="KH_dom-like_a/b"/>
</dbReference>
<dbReference type="InterPro" id="IPR004044">
    <property type="entry name" value="KH_dom_type_2"/>
</dbReference>
<dbReference type="InterPro" id="IPR009019">
    <property type="entry name" value="KH_sf_prok-type"/>
</dbReference>
<dbReference type="InterPro" id="IPR036419">
    <property type="entry name" value="Ribosomal_S3_C_sf"/>
</dbReference>
<dbReference type="InterPro" id="IPR005704">
    <property type="entry name" value="Ribosomal_uS3_bac-typ"/>
</dbReference>
<dbReference type="InterPro" id="IPR001351">
    <property type="entry name" value="Ribosomal_uS3_C"/>
</dbReference>
<dbReference type="InterPro" id="IPR018280">
    <property type="entry name" value="Ribosomal_uS3_CS"/>
</dbReference>
<dbReference type="NCBIfam" id="TIGR01009">
    <property type="entry name" value="rpsC_bact"/>
    <property type="match status" value="1"/>
</dbReference>
<dbReference type="PANTHER" id="PTHR11760">
    <property type="entry name" value="30S/40S RIBOSOMAL PROTEIN S3"/>
    <property type="match status" value="1"/>
</dbReference>
<dbReference type="PANTHER" id="PTHR11760:SF19">
    <property type="entry name" value="SMALL RIBOSOMAL SUBUNIT PROTEIN US3C"/>
    <property type="match status" value="1"/>
</dbReference>
<dbReference type="Pfam" id="PF00189">
    <property type="entry name" value="Ribosomal_S3_C"/>
    <property type="match status" value="1"/>
</dbReference>
<dbReference type="SUPFAM" id="SSF54814">
    <property type="entry name" value="Prokaryotic type KH domain (KH-domain type II)"/>
    <property type="match status" value="1"/>
</dbReference>
<dbReference type="SUPFAM" id="SSF54821">
    <property type="entry name" value="Ribosomal protein S3 C-terminal domain"/>
    <property type="match status" value="1"/>
</dbReference>
<dbReference type="PROSITE" id="PS50823">
    <property type="entry name" value="KH_TYPE_2"/>
    <property type="match status" value="1"/>
</dbReference>
<dbReference type="PROSITE" id="PS00548">
    <property type="entry name" value="RIBOSOMAL_S3"/>
    <property type="match status" value="1"/>
</dbReference>
<gene>
    <name type="primary">rps3</name>
</gene>
<geneLocation type="chloroplast"/>
<protein>
    <recommendedName>
        <fullName evidence="2">Small ribosomal subunit protein uS3c</fullName>
    </recommendedName>
    <alternativeName>
        <fullName>30S ribosomal protein S3, chloroplastic</fullName>
    </alternativeName>
</protein>